<name>NCOA7_HUMAN</name>
<reference key="1">
    <citation type="journal article" date="2002" name="Mol. Cell. Biol.">
        <title>ERAP140, a conserved tissue-specific nuclear receptor coactivator.</title>
        <authorList>
            <person name="Shao W."/>
            <person name="Halachmi S."/>
            <person name="Brown M."/>
        </authorList>
    </citation>
    <scope>NUCLEOTIDE SEQUENCE [MRNA] (ISOFORM 1)</scope>
    <scope>FUNCTION</scope>
    <scope>INTERACTION WITH ESR1; ESR2A; ESR2B; THRB; PPARG AND RARA</scope>
    <scope>TISSUE SPECIFICITY</scope>
    <scope>MUTAGENESIS OF 511-LEU--LEU-517 AND 522-LEU-ILE-523</scope>
    <scope>VARIANT ALA-399</scope>
</reference>
<reference key="2">
    <citation type="journal article" date="2003" name="Cancer Lett.">
        <title>Neuroblastoma oligo-capping cDNA project: toward the understanding of the genesis and biology of neuroblastoma.</title>
        <authorList>
            <person name="Ohira M."/>
            <person name="Morohashi A."/>
            <person name="Nakamura Y."/>
            <person name="Isogai E."/>
            <person name="Furuya K."/>
            <person name="Hamano S."/>
            <person name="Machida T."/>
            <person name="Aoyama M."/>
            <person name="Fukumura M."/>
            <person name="Miyazaki K."/>
            <person name="Suzuki Y."/>
            <person name="Sugano S."/>
            <person name="Hirato J."/>
            <person name="Nakagawara A."/>
        </authorList>
    </citation>
    <scope>NUCLEOTIDE SEQUENCE [LARGE SCALE MRNA] (ISOFORM 3)</scope>
    <source>
        <tissue>Neuroblastoma</tissue>
    </source>
</reference>
<reference key="3">
    <citation type="journal article" date="2004" name="Nat. Genet.">
        <title>Complete sequencing and characterization of 21,243 full-length human cDNAs.</title>
        <authorList>
            <person name="Ota T."/>
            <person name="Suzuki Y."/>
            <person name="Nishikawa T."/>
            <person name="Otsuki T."/>
            <person name="Sugiyama T."/>
            <person name="Irie R."/>
            <person name="Wakamatsu A."/>
            <person name="Hayashi K."/>
            <person name="Sato H."/>
            <person name="Nagai K."/>
            <person name="Kimura K."/>
            <person name="Makita H."/>
            <person name="Sekine M."/>
            <person name="Obayashi M."/>
            <person name="Nishi T."/>
            <person name="Shibahara T."/>
            <person name="Tanaka T."/>
            <person name="Ishii S."/>
            <person name="Yamamoto J."/>
            <person name="Saito K."/>
            <person name="Kawai Y."/>
            <person name="Isono Y."/>
            <person name="Nakamura Y."/>
            <person name="Nagahari K."/>
            <person name="Murakami K."/>
            <person name="Yasuda T."/>
            <person name="Iwayanagi T."/>
            <person name="Wagatsuma M."/>
            <person name="Shiratori A."/>
            <person name="Sudo H."/>
            <person name="Hosoiri T."/>
            <person name="Kaku Y."/>
            <person name="Kodaira H."/>
            <person name="Kondo H."/>
            <person name="Sugawara M."/>
            <person name="Takahashi M."/>
            <person name="Kanda K."/>
            <person name="Yokoi T."/>
            <person name="Furuya T."/>
            <person name="Kikkawa E."/>
            <person name="Omura Y."/>
            <person name="Abe K."/>
            <person name="Kamihara K."/>
            <person name="Katsuta N."/>
            <person name="Sato K."/>
            <person name="Tanikawa M."/>
            <person name="Yamazaki M."/>
            <person name="Ninomiya K."/>
            <person name="Ishibashi T."/>
            <person name="Yamashita H."/>
            <person name="Murakawa K."/>
            <person name="Fujimori K."/>
            <person name="Tanai H."/>
            <person name="Kimata M."/>
            <person name="Watanabe M."/>
            <person name="Hiraoka S."/>
            <person name="Chiba Y."/>
            <person name="Ishida S."/>
            <person name="Ono Y."/>
            <person name="Takiguchi S."/>
            <person name="Watanabe S."/>
            <person name="Yosida M."/>
            <person name="Hotuta T."/>
            <person name="Kusano J."/>
            <person name="Kanehori K."/>
            <person name="Takahashi-Fujii A."/>
            <person name="Hara H."/>
            <person name="Tanase T.-O."/>
            <person name="Nomura Y."/>
            <person name="Togiya S."/>
            <person name="Komai F."/>
            <person name="Hara R."/>
            <person name="Takeuchi K."/>
            <person name="Arita M."/>
            <person name="Imose N."/>
            <person name="Musashino K."/>
            <person name="Yuuki H."/>
            <person name="Oshima A."/>
            <person name="Sasaki N."/>
            <person name="Aotsuka S."/>
            <person name="Yoshikawa Y."/>
            <person name="Matsunawa H."/>
            <person name="Ichihara T."/>
            <person name="Shiohata N."/>
            <person name="Sano S."/>
            <person name="Moriya S."/>
            <person name="Momiyama H."/>
            <person name="Satoh N."/>
            <person name="Takami S."/>
            <person name="Terashima Y."/>
            <person name="Suzuki O."/>
            <person name="Nakagawa S."/>
            <person name="Senoh A."/>
            <person name="Mizoguchi H."/>
            <person name="Goto Y."/>
            <person name="Shimizu F."/>
            <person name="Wakebe H."/>
            <person name="Hishigaki H."/>
            <person name="Watanabe T."/>
            <person name="Sugiyama A."/>
            <person name="Takemoto M."/>
            <person name="Kawakami B."/>
            <person name="Yamazaki M."/>
            <person name="Watanabe K."/>
            <person name="Kumagai A."/>
            <person name="Itakura S."/>
            <person name="Fukuzumi Y."/>
            <person name="Fujimori Y."/>
            <person name="Komiyama M."/>
            <person name="Tashiro H."/>
            <person name="Tanigami A."/>
            <person name="Fujiwara T."/>
            <person name="Ono T."/>
            <person name="Yamada K."/>
            <person name="Fujii Y."/>
            <person name="Ozaki K."/>
            <person name="Hirao M."/>
            <person name="Ohmori Y."/>
            <person name="Kawabata A."/>
            <person name="Hikiji T."/>
            <person name="Kobatake N."/>
            <person name="Inagaki H."/>
            <person name="Ikema Y."/>
            <person name="Okamoto S."/>
            <person name="Okitani R."/>
            <person name="Kawakami T."/>
            <person name="Noguchi S."/>
            <person name="Itoh T."/>
            <person name="Shigeta K."/>
            <person name="Senba T."/>
            <person name="Matsumura K."/>
            <person name="Nakajima Y."/>
            <person name="Mizuno T."/>
            <person name="Morinaga M."/>
            <person name="Sasaki M."/>
            <person name="Togashi T."/>
            <person name="Oyama M."/>
            <person name="Hata H."/>
            <person name="Watanabe M."/>
            <person name="Komatsu T."/>
            <person name="Mizushima-Sugano J."/>
            <person name="Satoh T."/>
            <person name="Shirai Y."/>
            <person name="Takahashi Y."/>
            <person name="Nakagawa K."/>
            <person name="Okumura K."/>
            <person name="Nagase T."/>
            <person name="Nomura N."/>
            <person name="Kikuchi H."/>
            <person name="Masuho Y."/>
            <person name="Yamashita R."/>
            <person name="Nakai K."/>
            <person name="Yada T."/>
            <person name="Nakamura Y."/>
            <person name="Ohara O."/>
            <person name="Isogai T."/>
            <person name="Sugano S."/>
        </authorList>
    </citation>
    <scope>NUCLEOTIDE SEQUENCE [LARGE SCALE MRNA] (ISOFORMS 5 AND 7)</scope>
    <scope>VARIANT ALA-399</scope>
    <source>
        <tissue>Amygdala</tissue>
    </source>
</reference>
<reference key="4">
    <citation type="journal article" date="2007" name="BMC Genomics">
        <title>The full-ORF clone resource of the German cDNA consortium.</title>
        <authorList>
            <person name="Bechtel S."/>
            <person name="Rosenfelder H."/>
            <person name="Duda A."/>
            <person name="Schmidt C.P."/>
            <person name="Ernst U."/>
            <person name="Wellenreuther R."/>
            <person name="Mehrle A."/>
            <person name="Schuster C."/>
            <person name="Bahr A."/>
            <person name="Bloecker H."/>
            <person name="Heubner D."/>
            <person name="Hoerlein A."/>
            <person name="Michel G."/>
            <person name="Wedler H."/>
            <person name="Koehrer K."/>
            <person name="Ottenwaelder B."/>
            <person name="Poustka A."/>
            <person name="Wiemann S."/>
            <person name="Schupp I."/>
        </authorList>
    </citation>
    <scope>NUCLEOTIDE SEQUENCE [LARGE SCALE MRNA] (ISOFORMS 1 AND 2)</scope>
    <source>
        <tissue>Amygdala</tissue>
        <tissue>Fetal kidney</tissue>
        <tissue>Spinal cord</tissue>
    </source>
</reference>
<reference key="5">
    <citation type="journal article" date="2003" name="Nature">
        <title>The DNA sequence and analysis of human chromosome 6.</title>
        <authorList>
            <person name="Mungall A.J."/>
            <person name="Palmer S.A."/>
            <person name="Sims S.K."/>
            <person name="Edwards C.A."/>
            <person name="Ashurst J.L."/>
            <person name="Wilming L."/>
            <person name="Jones M.C."/>
            <person name="Horton R."/>
            <person name="Hunt S.E."/>
            <person name="Scott C.E."/>
            <person name="Gilbert J.G.R."/>
            <person name="Clamp M.E."/>
            <person name="Bethel G."/>
            <person name="Milne S."/>
            <person name="Ainscough R."/>
            <person name="Almeida J.P."/>
            <person name="Ambrose K.D."/>
            <person name="Andrews T.D."/>
            <person name="Ashwell R.I.S."/>
            <person name="Babbage A.K."/>
            <person name="Bagguley C.L."/>
            <person name="Bailey J."/>
            <person name="Banerjee R."/>
            <person name="Barker D.J."/>
            <person name="Barlow K.F."/>
            <person name="Bates K."/>
            <person name="Beare D.M."/>
            <person name="Beasley H."/>
            <person name="Beasley O."/>
            <person name="Bird C.P."/>
            <person name="Blakey S.E."/>
            <person name="Bray-Allen S."/>
            <person name="Brook J."/>
            <person name="Brown A.J."/>
            <person name="Brown J.Y."/>
            <person name="Burford D.C."/>
            <person name="Burrill W."/>
            <person name="Burton J."/>
            <person name="Carder C."/>
            <person name="Carter N.P."/>
            <person name="Chapman J.C."/>
            <person name="Clark S.Y."/>
            <person name="Clark G."/>
            <person name="Clee C.M."/>
            <person name="Clegg S."/>
            <person name="Cobley V."/>
            <person name="Collier R.E."/>
            <person name="Collins J.E."/>
            <person name="Colman L.K."/>
            <person name="Corby N.R."/>
            <person name="Coville G.J."/>
            <person name="Culley K.M."/>
            <person name="Dhami P."/>
            <person name="Davies J."/>
            <person name="Dunn M."/>
            <person name="Earthrowl M.E."/>
            <person name="Ellington A.E."/>
            <person name="Evans K.A."/>
            <person name="Faulkner L."/>
            <person name="Francis M.D."/>
            <person name="Frankish A."/>
            <person name="Frankland J."/>
            <person name="French L."/>
            <person name="Garner P."/>
            <person name="Garnett J."/>
            <person name="Ghori M.J."/>
            <person name="Gilby L.M."/>
            <person name="Gillson C.J."/>
            <person name="Glithero R.J."/>
            <person name="Grafham D.V."/>
            <person name="Grant M."/>
            <person name="Gribble S."/>
            <person name="Griffiths C."/>
            <person name="Griffiths M.N.D."/>
            <person name="Hall R."/>
            <person name="Halls K.S."/>
            <person name="Hammond S."/>
            <person name="Harley J.L."/>
            <person name="Hart E.A."/>
            <person name="Heath P.D."/>
            <person name="Heathcott R."/>
            <person name="Holmes S.J."/>
            <person name="Howden P.J."/>
            <person name="Howe K.L."/>
            <person name="Howell G.R."/>
            <person name="Huckle E."/>
            <person name="Humphray S.J."/>
            <person name="Humphries M.D."/>
            <person name="Hunt A.R."/>
            <person name="Johnson C.M."/>
            <person name="Joy A.A."/>
            <person name="Kay M."/>
            <person name="Keenan S.J."/>
            <person name="Kimberley A.M."/>
            <person name="King A."/>
            <person name="Laird G.K."/>
            <person name="Langford C."/>
            <person name="Lawlor S."/>
            <person name="Leongamornlert D.A."/>
            <person name="Leversha M."/>
            <person name="Lloyd C.R."/>
            <person name="Lloyd D.M."/>
            <person name="Loveland J.E."/>
            <person name="Lovell J."/>
            <person name="Martin S."/>
            <person name="Mashreghi-Mohammadi M."/>
            <person name="Maslen G.L."/>
            <person name="Matthews L."/>
            <person name="McCann O.T."/>
            <person name="McLaren S.J."/>
            <person name="McLay K."/>
            <person name="McMurray A."/>
            <person name="Moore M.J.F."/>
            <person name="Mullikin J.C."/>
            <person name="Niblett D."/>
            <person name="Nickerson T."/>
            <person name="Novik K.L."/>
            <person name="Oliver K."/>
            <person name="Overton-Larty E.K."/>
            <person name="Parker A."/>
            <person name="Patel R."/>
            <person name="Pearce A.V."/>
            <person name="Peck A.I."/>
            <person name="Phillimore B.J.C.T."/>
            <person name="Phillips S."/>
            <person name="Plumb R.W."/>
            <person name="Porter K.M."/>
            <person name="Ramsey Y."/>
            <person name="Ranby S.A."/>
            <person name="Rice C.M."/>
            <person name="Ross M.T."/>
            <person name="Searle S.M."/>
            <person name="Sehra H.K."/>
            <person name="Sheridan E."/>
            <person name="Skuce C.D."/>
            <person name="Smith S."/>
            <person name="Smith M."/>
            <person name="Spraggon L."/>
            <person name="Squares S.L."/>
            <person name="Steward C.A."/>
            <person name="Sycamore N."/>
            <person name="Tamlyn-Hall G."/>
            <person name="Tester J."/>
            <person name="Theaker A.J."/>
            <person name="Thomas D.W."/>
            <person name="Thorpe A."/>
            <person name="Tracey A."/>
            <person name="Tromans A."/>
            <person name="Tubby B."/>
            <person name="Wall M."/>
            <person name="Wallis J.M."/>
            <person name="West A.P."/>
            <person name="White S.S."/>
            <person name="Whitehead S.L."/>
            <person name="Whittaker H."/>
            <person name="Wild A."/>
            <person name="Willey D.J."/>
            <person name="Wilmer T.E."/>
            <person name="Wood J.M."/>
            <person name="Wray P.W."/>
            <person name="Wyatt J.C."/>
            <person name="Young L."/>
            <person name="Younger R.M."/>
            <person name="Bentley D.R."/>
            <person name="Coulson A."/>
            <person name="Durbin R.M."/>
            <person name="Hubbard T."/>
            <person name="Sulston J.E."/>
            <person name="Dunham I."/>
            <person name="Rogers J."/>
            <person name="Beck S."/>
        </authorList>
    </citation>
    <scope>NUCLEOTIDE SEQUENCE [LARGE SCALE GENOMIC DNA]</scope>
</reference>
<reference key="6">
    <citation type="submission" date="2005-09" db="EMBL/GenBank/DDBJ databases">
        <authorList>
            <person name="Mural R.J."/>
            <person name="Istrail S."/>
            <person name="Sutton G.G."/>
            <person name="Florea L."/>
            <person name="Halpern A.L."/>
            <person name="Mobarry C.M."/>
            <person name="Lippert R."/>
            <person name="Walenz B."/>
            <person name="Shatkay H."/>
            <person name="Dew I."/>
            <person name="Miller J.R."/>
            <person name="Flanigan M.J."/>
            <person name="Edwards N.J."/>
            <person name="Bolanos R."/>
            <person name="Fasulo D."/>
            <person name="Halldorsson B.V."/>
            <person name="Hannenhalli S."/>
            <person name="Turner R."/>
            <person name="Yooseph S."/>
            <person name="Lu F."/>
            <person name="Nusskern D.R."/>
            <person name="Shue B.C."/>
            <person name="Zheng X.H."/>
            <person name="Zhong F."/>
            <person name="Delcher A.L."/>
            <person name="Huson D.H."/>
            <person name="Kravitz S.A."/>
            <person name="Mouchard L."/>
            <person name="Reinert K."/>
            <person name="Remington K.A."/>
            <person name="Clark A.G."/>
            <person name="Waterman M.S."/>
            <person name="Eichler E.E."/>
            <person name="Adams M.D."/>
            <person name="Hunkapiller M.W."/>
            <person name="Myers E.W."/>
            <person name="Venter J.C."/>
        </authorList>
    </citation>
    <scope>NUCLEOTIDE SEQUENCE [LARGE SCALE GENOMIC DNA]</scope>
    <scope>VARIANT ALA-399</scope>
</reference>
<reference key="7">
    <citation type="journal article" date="2004" name="Genome Res.">
        <title>The status, quality, and expansion of the NIH full-length cDNA project: the Mammalian Gene Collection (MGC).</title>
        <authorList>
            <consortium name="The MGC Project Team"/>
        </authorList>
    </citation>
    <scope>NUCLEOTIDE SEQUENCE [LARGE SCALE MRNA] (ISOFORMS 1; 4 AND 6)</scope>
    <scope>VARIANT ALA-399</scope>
    <source>
        <tissue>Brain</tissue>
        <tissue>Kidney</tissue>
        <tissue>Lung</tissue>
        <tissue>Muscle</tissue>
        <tissue>Placenta</tissue>
        <tissue>Testis</tissue>
    </source>
</reference>
<reference key="8">
    <citation type="journal article" date="1999" name="Arch. Biochem. Biophys.">
        <title>Interactions of nuclear receptor coactivator/corepressor proteins with the aryl hydrocarbon receptor complex.</title>
        <authorList>
            <person name="Nguyen T.A."/>
            <person name="Hoivik D."/>
            <person name="Lee J.-E."/>
            <person name="Safe S."/>
        </authorList>
    </citation>
    <scope>INTERACTION WITH HETERODIMER AHR-ARNT</scope>
</reference>
<reference key="9">
    <citation type="journal article" date="2008" name="Proc. Natl. Acad. Sci. U.S.A.">
        <title>A quantitative atlas of mitotic phosphorylation.</title>
        <authorList>
            <person name="Dephoure N."/>
            <person name="Zhou C."/>
            <person name="Villen J."/>
            <person name="Beausoleil S.A."/>
            <person name="Bakalarski C.E."/>
            <person name="Elledge S.J."/>
            <person name="Gygi S.P."/>
        </authorList>
    </citation>
    <scope>PHOSPHORYLATION [LARGE SCALE ANALYSIS] AT SER-183 AND SER-441</scope>
    <scope>IDENTIFICATION BY MASS SPECTROMETRY [LARGE SCALE ANALYSIS]</scope>
    <source>
        <tissue>Cervix carcinoma</tissue>
    </source>
</reference>
<reference key="10">
    <citation type="journal article" date="2009" name="Anal. Chem.">
        <title>Lys-N and trypsin cover complementary parts of the phosphoproteome in a refined SCX-based approach.</title>
        <authorList>
            <person name="Gauci S."/>
            <person name="Helbig A.O."/>
            <person name="Slijper M."/>
            <person name="Krijgsveld J."/>
            <person name="Heck A.J."/>
            <person name="Mohammed S."/>
        </authorList>
    </citation>
    <scope>IDENTIFICATION BY MASS SPECTROMETRY [LARGE SCALE ANALYSIS]</scope>
</reference>
<reference key="11">
    <citation type="journal article" date="2009" name="Sci. Signal.">
        <title>Quantitative phosphoproteomic analysis of T cell receptor signaling reveals system-wide modulation of protein-protein interactions.</title>
        <authorList>
            <person name="Mayya V."/>
            <person name="Lundgren D.H."/>
            <person name="Hwang S.-I."/>
            <person name="Rezaul K."/>
            <person name="Wu L."/>
            <person name="Eng J.K."/>
            <person name="Rodionov V."/>
            <person name="Han D.K."/>
        </authorList>
    </citation>
    <scope>PHOSPHORYLATION [LARGE SCALE ANALYSIS] AT SER-179; SER-208 AND SER-211</scope>
    <scope>IDENTIFICATION BY MASS SPECTROMETRY [LARGE SCALE ANALYSIS]</scope>
    <source>
        <tissue>Leukemic T-cell</tissue>
    </source>
</reference>
<reference key="12">
    <citation type="journal article" date="2010" name="Sci. Signal.">
        <title>Quantitative phosphoproteomics reveals widespread full phosphorylation site occupancy during mitosis.</title>
        <authorList>
            <person name="Olsen J.V."/>
            <person name="Vermeulen M."/>
            <person name="Santamaria A."/>
            <person name="Kumar C."/>
            <person name="Miller M.L."/>
            <person name="Jensen L.J."/>
            <person name="Gnad F."/>
            <person name="Cox J."/>
            <person name="Jensen T.S."/>
            <person name="Nigg E.A."/>
            <person name="Brunak S."/>
            <person name="Mann M."/>
        </authorList>
    </citation>
    <scope>PHOSPHORYLATION [LARGE SCALE ANALYSIS] AT SER-208 AND SER-211</scope>
    <scope>IDENTIFICATION BY MASS SPECTROMETRY [LARGE SCALE ANALYSIS]</scope>
    <source>
        <tissue>Cervix carcinoma</tissue>
    </source>
</reference>
<reference key="13">
    <citation type="journal article" date="2012" name="Proc. Natl. Acad. Sci. U.S.A.">
        <title>N-terminal acetylome analyses and functional insights of the N-terminal acetyltransferase NatB.</title>
        <authorList>
            <person name="Van Damme P."/>
            <person name="Lasa M."/>
            <person name="Polevoda B."/>
            <person name="Gazquez C."/>
            <person name="Elosegui-Artola A."/>
            <person name="Kim D.S."/>
            <person name="De Juan-Pardo E."/>
            <person name="Demeyer K."/>
            <person name="Hole K."/>
            <person name="Larrea E."/>
            <person name="Timmerman E."/>
            <person name="Prieto J."/>
            <person name="Arnesen T."/>
            <person name="Sherman F."/>
            <person name="Gevaert K."/>
            <person name="Aldabe R."/>
        </authorList>
    </citation>
    <scope>ACETYLATION [LARGE SCALE ANALYSIS] AT MET-1</scope>
    <scope>IDENTIFICATION BY MASS SPECTROMETRY [LARGE SCALE ANALYSIS]</scope>
</reference>
<reference key="14">
    <citation type="journal article" date="2013" name="J. Proteome Res.">
        <title>Toward a comprehensive characterization of a human cancer cell phosphoproteome.</title>
        <authorList>
            <person name="Zhou H."/>
            <person name="Di Palma S."/>
            <person name="Preisinger C."/>
            <person name="Peng M."/>
            <person name="Polat A.N."/>
            <person name="Heck A.J."/>
            <person name="Mohammed S."/>
        </authorList>
    </citation>
    <scope>PHOSPHORYLATION [LARGE SCALE ANALYSIS] AT SER-89; THR-134; SER-179; SER-208; SER-211 AND SER-502</scope>
    <scope>IDENTIFICATION BY MASS SPECTROMETRY [LARGE SCALE ANALYSIS]</scope>
    <source>
        <tissue>Cervix carcinoma</tissue>
        <tissue>Erythroleukemia</tissue>
    </source>
</reference>
<reference key="15">
    <citation type="journal article" date="2014" name="J. Proteomics">
        <title>An enzyme assisted RP-RPLC approach for in-depth analysis of human liver phosphoproteome.</title>
        <authorList>
            <person name="Bian Y."/>
            <person name="Song C."/>
            <person name="Cheng K."/>
            <person name="Dong M."/>
            <person name="Wang F."/>
            <person name="Huang J."/>
            <person name="Sun D."/>
            <person name="Wang L."/>
            <person name="Ye M."/>
            <person name="Zou H."/>
        </authorList>
    </citation>
    <scope>PHOSPHORYLATION [LARGE SCALE ANALYSIS] AT SER-208 AND SER-211</scope>
    <scope>IDENTIFICATION BY MASS SPECTROMETRY [LARGE SCALE ANALYSIS]</scope>
    <source>
        <tissue>Liver</tissue>
    </source>
</reference>
<keyword id="KW-0002">3D-structure</keyword>
<keyword id="KW-0007">Acetylation</keyword>
<keyword id="KW-0010">Activator</keyword>
<keyword id="KW-0025">Alternative splicing</keyword>
<keyword id="KW-0175">Coiled coil</keyword>
<keyword id="KW-0539">Nucleus</keyword>
<keyword id="KW-0597">Phosphoprotein</keyword>
<keyword id="KW-1267">Proteomics identification</keyword>
<keyword id="KW-1185">Reference proteome</keyword>
<keyword id="KW-0804">Transcription</keyword>
<keyword id="KW-0805">Transcription regulation</keyword>
<sequence>MDTKEEKKERKQSYFARLKKKKQAKQNAETASAVATRTHTGKEDNNTVVLEPDKCNIAVEEEYMTDEKKKRKSNQLKEIRRTELKRYYSIDDNQNKTHDKKEKKMVVQKPHGTMEYTAGNQDTLNSIALKFNITPNKLVELNKLFTHTIVPGQVLFVPDANSPSSTLRLSSSSPGATVSPSSSDAEYDKLPDADLARKALKPIERVLSSTSEEDEPGVVKFLKMNCRYFTDGKGVVGGVMIVTPNNIMFDPHKSDPLVIENGCEEYGLICPMEEVVSIALYNDISHMKIKDALPSDLPQDLCPLYRPGEWEDLASEKDINPFSKFKSINKEKRQQNGEKIMTSDSRPIVPLEKSTGHTPTKPSGSSVSEKLKKLDSSRETSHGSPTVTKLSKEPSDTSSAFESTAKENFLGEDDDFVDLEELSSQTGGGMHKKDTLKECLSLDPEERKKAESQINNSAVEMQVQSALAFLGTENDVELKGALDLETCEKQDIMPEVDKQSGSPESRVENTLNIHEDLDKVKLIEYYLTKNKEGPQVSENLQKTELSDGKSIEPGGIDITLSSSLSQAGDPITEGNKEPDKTWVKKGEPLPVKLNSSTEANVIKEALDSSLESTLDNSCQGAQMDNKSEVQLWLLKRIQVPIEDILPSKEEKSKTPPMFLCIKVGKPMRKSFATHTAAMVQQYGKRRKQPEYWFAVPRERVDHLYTFFVQWSPDVYGKDAKEQGFVVVEKEELNMIDNFFSEPTTKSWEIITVEEAKRRKSTCSYYEDEDEEVLPVLRPHSALLENMHIEQLARRLPARVQGYPWRLAYSTLEHGTSLKTLYRKSASLDSPVLLVIKDMDNQIFGAYATHPFKFSDHYYGTGETFLYTFSPHFKVFKWSGENSYFINGDISSLELGGGGGRFGLWLDADLYHGRSNSCSTFNNDILSKKEDFIVQDLEVWAFD</sequence>
<comment type="function">
    <text evidence="7">Enhances the transcriptional activities of several nuclear receptors. Involved in the coactivation of different nuclear receptors, such as ESR1, THRB, PPARG and RARA.</text>
</comment>
<comment type="subunit">
    <text evidence="6 7">Interacts with ESR1, ESR2A, ESR2B, THRB, PPARG and RARA in a ligand-inducible manner. Interacts with the heterodimer AHR-ARNT.</text>
</comment>
<comment type="interaction">
    <interactant intactId="EBI-80799">
        <id>Q8NI08</id>
    </interactant>
    <interactant intactId="EBI-80780">
        <id>P35869</id>
        <label>AHR</label>
    </interactant>
    <organismsDiffer>false</organismsDiffer>
    <experiments>2</experiments>
</comment>
<comment type="interaction">
    <interactant intactId="EBI-80799">
        <id>Q8NI08</id>
    </interactant>
    <interactant intactId="EBI-80809">
        <id>P27540</id>
        <label>ARNT</label>
    </interactant>
    <organismsDiffer>false</organismsDiffer>
    <experiments>2</experiments>
</comment>
<comment type="interaction">
    <interactant intactId="EBI-80799">
        <id>Q8NI08</id>
    </interactant>
    <interactant intactId="EBI-11993172">
        <id>O95057</id>
        <label>DIRAS1</label>
    </interactant>
    <organismsDiffer>false</organismsDiffer>
    <experiments>2</experiments>
</comment>
<comment type="interaction">
    <interactant intactId="EBI-80799">
        <id>Q8NI08</id>
    </interactant>
    <interactant intactId="EBI-712001">
        <id>O95166</id>
        <label>GABARAP</label>
    </interactant>
    <organismsDiffer>false</organismsDiffer>
    <experiments>4</experiments>
</comment>
<comment type="interaction">
    <interactant intactId="EBI-80799">
        <id>Q8NI08</id>
    </interactant>
    <interactant intactId="EBI-746969">
        <id>Q9H0R8</id>
        <label>GABARAPL1</label>
    </interactant>
    <organismsDiffer>false</organismsDiffer>
    <experiments>3</experiments>
</comment>
<comment type="interaction">
    <interactant intactId="EBI-80799">
        <id>Q8NI08</id>
    </interactant>
    <interactant intactId="EBI-720116">
        <id>P60520</id>
        <label>GABARAPL2</label>
    </interactant>
    <organismsDiffer>false</organismsDiffer>
    <experiments>2</experiments>
</comment>
<comment type="interaction">
    <interactant intactId="EBI-80799">
        <id>Q8NI08</id>
    </interactant>
    <interactant intactId="EBI-373144">
        <id>Q9GZQ8</id>
        <label>MAP1LC3B</label>
    </interactant>
    <organismsDiffer>false</organismsDiffer>
    <experiments>2</experiments>
</comment>
<comment type="interaction">
    <interactant intactId="EBI-80799">
        <id>Q8NI08</id>
    </interactant>
    <interactant intactId="EBI-2603996">
        <id>Q9BXW4</id>
        <label>MAP1LC3C</label>
    </interactant>
    <organismsDiffer>false</organismsDiffer>
    <experiments>2</experiments>
</comment>
<comment type="subcellular location">
    <subcellularLocation>
        <location evidence="15">Nucleus</location>
    </subcellularLocation>
</comment>
<comment type="alternative products">
    <event type="alternative splicing"/>
    <isoform>
        <id>Q8NI08-1</id>
        <name>1</name>
        <sequence type="displayed"/>
    </isoform>
    <isoform>
        <id>Q8NI08-2</id>
        <name>2</name>
        <sequence type="described" ref="VSP_019638"/>
    </isoform>
    <isoform>
        <id>Q8NI08-3</id>
        <name>3</name>
        <sequence type="described" ref="VSP_019637"/>
    </isoform>
    <isoform>
        <id>Q8NI08-4</id>
        <name>4</name>
        <sequence type="described" ref="VSP_019635 VSP_019636"/>
    </isoform>
    <isoform>
        <id>Q8NI08-5</id>
        <name>5</name>
        <sequence type="described" ref="VSP_019632 VSP_019639"/>
    </isoform>
    <isoform>
        <id>Q8NI08-6</id>
        <name>6</name>
        <sequence type="described" ref="VSP_019633 VSP_019634"/>
    </isoform>
    <isoform>
        <id>Q8NI08-7</id>
        <name>7</name>
        <sequence type="described" ref="VSP_044859 VSP_019638"/>
    </isoform>
</comment>
<comment type="tissue specificity">
    <text evidence="7">Highly expressed in brain. Weakly expressed in mammary gland, ovary, uterus, prostate, stomach, bladder, spinal cord and pancreas. Expressed in cancer cell line.</text>
</comment>
<comment type="similarity">
    <text evidence="15">Belongs to the OXR1 family.</text>
</comment>
<comment type="sequence caution" evidence="15">
    <conflict type="frameshift">
        <sequence resource="EMBL-CDS" id="CAD89948"/>
    </conflict>
</comment>
<protein>
    <recommendedName>
        <fullName>Nuclear receptor coactivator 7</fullName>
    </recommendedName>
    <alternativeName>
        <fullName>140 kDa estrogen receptor-associated protein</fullName>
    </alternativeName>
    <alternativeName>
        <fullName>Estrogen nuclear receptor coactivator 1</fullName>
    </alternativeName>
</protein>
<feature type="chain" id="PRO_0000245229" description="Nuclear receptor coactivator 7">
    <location>
        <begin position="1"/>
        <end position="942"/>
    </location>
</feature>
<feature type="domain" description="LysM" evidence="3">
    <location>
        <begin position="114"/>
        <end position="157"/>
    </location>
</feature>
<feature type="domain" description="TLDc" evidence="4">
    <location>
        <begin position="781"/>
        <end position="942"/>
    </location>
</feature>
<feature type="region of interest" description="Disordered" evidence="5">
    <location>
        <begin position="1"/>
        <end position="46"/>
    </location>
</feature>
<feature type="region of interest" description="Disordered" evidence="5">
    <location>
        <begin position="161"/>
        <end position="188"/>
    </location>
</feature>
<feature type="region of interest" description="Disordered" evidence="5">
    <location>
        <begin position="324"/>
        <end position="416"/>
    </location>
</feature>
<feature type="coiled-coil region" evidence="2">
    <location>
        <begin position="4"/>
        <end position="29"/>
    </location>
</feature>
<feature type="compositionally biased region" description="Basic and acidic residues" evidence="5">
    <location>
        <begin position="1"/>
        <end position="12"/>
    </location>
</feature>
<feature type="compositionally biased region" description="Polar residues" evidence="5">
    <location>
        <begin position="25"/>
        <end position="38"/>
    </location>
</feature>
<feature type="compositionally biased region" description="Low complexity" evidence="5">
    <location>
        <begin position="162"/>
        <end position="183"/>
    </location>
</feature>
<feature type="compositionally biased region" description="Polar residues" evidence="5">
    <location>
        <begin position="356"/>
        <end position="368"/>
    </location>
</feature>
<feature type="compositionally biased region" description="Basic and acidic residues" evidence="5">
    <location>
        <begin position="369"/>
        <end position="381"/>
    </location>
</feature>
<feature type="modified residue" description="N-acetylmethionine" evidence="19">
    <location>
        <position position="1"/>
    </location>
</feature>
<feature type="modified residue" description="Phosphoserine" evidence="20">
    <location>
        <position position="89"/>
    </location>
</feature>
<feature type="modified residue" description="Phosphothreonine" evidence="20">
    <location>
        <position position="134"/>
    </location>
</feature>
<feature type="modified residue" description="Phosphoserine" evidence="17 20">
    <location>
        <position position="179"/>
    </location>
</feature>
<feature type="modified residue" description="Phosphoserine" evidence="16">
    <location>
        <position position="183"/>
    </location>
</feature>
<feature type="modified residue" description="Phosphoserine" evidence="17 18 20 21">
    <location>
        <position position="208"/>
    </location>
</feature>
<feature type="modified residue" description="Phosphoserine" evidence="1">
    <location>
        <position position="209"/>
    </location>
</feature>
<feature type="modified residue" description="Phosphoserine" evidence="17 18 20 21">
    <location>
        <position position="211"/>
    </location>
</feature>
<feature type="modified residue" description="Phosphoserine" evidence="16">
    <location>
        <position position="441"/>
    </location>
</feature>
<feature type="modified residue" description="Phosphoserine" evidence="1">
    <location>
        <position position="500"/>
    </location>
</feature>
<feature type="modified residue" description="Phosphoserine" evidence="20">
    <location>
        <position position="502"/>
    </location>
</feature>
<feature type="splice variant" id="VSP_019632" description="In isoform 5." evidence="12">
    <location>
        <begin position="1"/>
        <end position="723"/>
    </location>
</feature>
<feature type="splice variant" id="VSP_044859" description="In isoform 7." evidence="12">
    <location>
        <begin position="1"/>
        <end position="104"/>
    </location>
</feature>
<feature type="splice variant" id="VSP_019633" description="In isoform 6." evidence="13">
    <original>DDNQNKTHDKKE</original>
    <variation>GEYSWRYCSIFI</variation>
    <location>
        <begin position="91"/>
        <end position="102"/>
    </location>
</feature>
<feature type="splice variant" id="VSP_019634" description="In isoform 6." evidence="13">
    <location>
        <begin position="103"/>
        <end position="942"/>
    </location>
</feature>
<feature type="splice variant" id="VSP_019635" description="In isoform 4." evidence="13">
    <original>GVVGGVMIVTPNNIMF</original>
    <variation>VYSNVICFLSLKSMKN</variation>
    <location>
        <begin position="234"/>
        <end position="249"/>
    </location>
</feature>
<feature type="splice variant" id="VSP_019636" description="In isoform 4." evidence="13">
    <location>
        <begin position="250"/>
        <end position="942"/>
    </location>
</feature>
<feature type="splice variant" id="VSP_019637" description="In isoform 3." evidence="11">
    <location>
        <begin position="296"/>
        <end position="942"/>
    </location>
</feature>
<feature type="splice variant" id="VSP_019638" description="In isoform 2 and isoform 7." evidence="12 14">
    <location>
        <begin position="296"/>
        <end position="306"/>
    </location>
</feature>
<feature type="splice variant" id="VSP_019639" description="In isoform 5." evidence="12">
    <original>FVVVEKEELNMIDNFFSEPTTKSWE</original>
    <variation>MRGQRLPLDIQIFYCARPDEEPFVK</variation>
    <location>
        <begin position="724"/>
        <end position="748"/>
    </location>
</feature>
<feature type="sequence variant" id="VAR_026965" description="In dbSNP:rs6919947." evidence="7 8 9 10">
    <original>S</original>
    <variation>A</variation>
    <location>
        <position position="399"/>
    </location>
</feature>
<feature type="sequence variant" id="VAR_050438" description="In dbSNP:rs35223550.">
    <original>G</original>
    <variation>R</variation>
    <location>
        <position position="533"/>
    </location>
</feature>
<feature type="sequence variant" id="VAR_026966" description="In dbSNP:rs1567.">
    <original>D</original>
    <variation>E</variation>
    <location>
        <position position="942"/>
    </location>
</feature>
<feature type="mutagenesis site" description="No action on the E2-induced ESR1 binding." evidence="7">
    <original>LNIHEDL</original>
    <variation>ANAHEDA</variation>
    <location>
        <begin position="511"/>
        <end position="517"/>
    </location>
</feature>
<feature type="mutagenesis site" description="Abolishes completely the E2-induced ESR1 binding." evidence="7">
    <original>LI</original>
    <variation>AA</variation>
    <location>
        <begin position="522"/>
        <end position="523"/>
    </location>
</feature>
<feature type="sequence conflict" description="In Ref. 2; BAE45732." evidence="15" ref="2">
    <original>S</original>
    <variation>T</variation>
    <location>
        <position position="32"/>
    </location>
</feature>
<feature type="sequence conflict" description="In Ref. 4; CAD89948." evidence="15" ref="4">
    <original>A</original>
    <variation>T</variation>
    <location>
        <position position="118"/>
    </location>
</feature>
<feature type="sequence conflict" description="In Ref. 1; AAM27392." evidence="15" ref="1">
    <original>T</original>
    <variation>A</variation>
    <location>
        <position position="177"/>
    </location>
</feature>
<feature type="sequence conflict" description="In Ref. 4; CAD89948." evidence="15" ref="4">
    <original>Y</original>
    <variation>H</variation>
    <location>
        <position position="228"/>
    </location>
</feature>
<feature type="sequence conflict" description="In Ref. 1; AAM27392." evidence="15" ref="1">
    <original>F</original>
    <variation>C</variation>
    <location>
        <position position="249"/>
    </location>
</feature>
<feature type="sequence conflict" description="In Ref. 4; CAD97627." evidence="15" ref="4">
    <original>Y</original>
    <variation>H</variation>
    <location>
        <position position="266"/>
    </location>
</feature>
<feature type="sequence conflict" description="In Ref. 1; AAM27392." evidence="15" ref="1">
    <original>I</original>
    <variation>T</variation>
    <location>
        <position position="278"/>
    </location>
</feature>
<feature type="sequence conflict" description="In Ref. 4; CAD89948." evidence="15" ref="4">
    <original>E</original>
    <variation>G</variation>
    <location>
        <position position="369"/>
    </location>
</feature>
<feature type="sequence conflict" description="In Ref. 3; BAH11810." evidence="15" ref="3">
    <original>G</original>
    <variation>S</variation>
    <location>
        <position position="723"/>
    </location>
</feature>
<feature type="sequence conflict" description="In Ref. 4; CAD89948." evidence="15" ref="4">
    <original>V</original>
    <variation>A</variation>
    <location>
        <position position="752"/>
    </location>
</feature>
<feature type="helix" evidence="22">
    <location>
        <begin position="785"/>
        <end position="792"/>
    </location>
</feature>
<feature type="helix" evidence="22">
    <location>
        <begin position="797"/>
        <end position="799"/>
    </location>
</feature>
<feature type="strand" evidence="22">
    <location>
        <begin position="805"/>
        <end position="809"/>
    </location>
</feature>
<feature type="turn" evidence="22">
    <location>
        <begin position="810"/>
        <end position="812"/>
    </location>
</feature>
<feature type="helix" evidence="22">
    <location>
        <begin position="817"/>
        <end position="824"/>
    </location>
</feature>
<feature type="strand" evidence="22">
    <location>
        <begin position="831"/>
        <end position="837"/>
    </location>
</feature>
<feature type="strand" evidence="22">
    <location>
        <begin position="842"/>
        <end position="849"/>
    </location>
</feature>
<feature type="strand" evidence="22">
    <location>
        <begin position="864"/>
        <end position="867"/>
    </location>
</feature>
<feature type="strand" evidence="22">
    <location>
        <begin position="869"/>
        <end position="871"/>
    </location>
</feature>
<feature type="strand" evidence="22">
    <location>
        <begin position="873"/>
        <end position="875"/>
    </location>
</feature>
<feature type="strand" evidence="22">
    <location>
        <begin position="885"/>
        <end position="887"/>
    </location>
</feature>
<feature type="strand" evidence="22">
    <location>
        <begin position="889"/>
        <end position="894"/>
    </location>
</feature>
<feature type="strand" evidence="22">
    <location>
        <begin position="902"/>
        <end position="906"/>
    </location>
</feature>
<feature type="strand" evidence="22">
    <location>
        <begin position="911"/>
        <end position="913"/>
    </location>
</feature>
<feature type="turn" evidence="22">
    <location>
        <begin position="918"/>
        <end position="921"/>
    </location>
</feature>
<feature type="strand" evidence="22">
    <location>
        <begin position="925"/>
        <end position="940"/>
    </location>
</feature>
<accession>Q8NI08</accession>
<accession>B2RNS2</accession>
<accession>B7Z2C4</accession>
<accession>B9EH71</accession>
<accession>G8JL91</accession>
<accession>Q3LID6</accession>
<accession>Q4G0V1</accession>
<accession>Q5TF95</accession>
<accession>Q6IPQ4</accession>
<accession>Q6NE83</accession>
<accession>Q86T89</accession>
<accession>Q8N1W4</accession>
<organism>
    <name type="scientific">Homo sapiens</name>
    <name type="common">Human</name>
    <dbReference type="NCBI Taxonomy" id="9606"/>
    <lineage>
        <taxon>Eukaryota</taxon>
        <taxon>Metazoa</taxon>
        <taxon>Chordata</taxon>
        <taxon>Craniata</taxon>
        <taxon>Vertebrata</taxon>
        <taxon>Euteleostomi</taxon>
        <taxon>Mammalia</taxon>
        <taxon>Eutheria</taxon>
        <taxon>Euarchontoglires</taxon>
        <taxon>Primates</taxon>
        <taxon>Haplorrhini</taxon>
        <taxon>Catarrhini</taxon>
        <taxon>Hominidae</taxon>
        <taxon>Homo</taxon>
    </lineage>
</organism>
<gene>
    <name type="primary">NCOA7</name>
    <name type="synonym">ERAP140</name>
    <name type="synonym">ESNA1</name>
    <name type="ORF">Nbla00052</name>
    <name type="ORF">Nbla10993</name>
</gene>
<evidence type="ECO:0000250" key="1">
    <source>
        <dbReference type="UniProtKB" id="Q6DFV7"/>
    </source>
</evidence>
<evidence type="ECO:0000255" key="2"/>
<evidence type="ECO:0000255" key="3">
    <source>
        <dbReference type="PROSITE-ProRule" id="PRU01118"/>
    </source>
</evidence>
<evidence type="ECO:0000255" key="4">
    <source>
        <dbReference type="PROSITE-ProRule" id="PRU01234"/>
    </source>
</evidence>
<evidence type="ECO:0000256" key="5">
    <source>
        <dbReference type="SAM" id="MobiDB-lite"/>
    </source>
</evidence>
<evidence type="ECO:0000269" key="6">
    <source>
    </source>
</evidence>
<evidence type="ECO:0000269" key="7">
    <source>
    </source>
</evidence>
<evidence type="ECO:0000269" key="8">
    <source>
    </source>
</evidence>
<evidence type="ECO:0000269" key="9">
    <source>
    </source>
</evidence>
<evidence type="ECO:0000269" key="10">
    <source ref="6"/>
</evidence>
<evidence type="ECO:0000303" key="11">
    <source>
    </source>
</evidence>
<evidence type="ECO:0000303" key="12">
    <source>
    </source>
</evidence>
<evidence type="ECO:0000303" key="13">
    <source>
    </source>
</evidence>
<evidence type="ECO:0000303" key="14">
    <source>
    </source>
</evidence>
<evidence type="ECO:0000305" key="15"/>
<evidence type="ECO:0007744" key="16">
    <source>
    </source>
</evidence>
<evidence type="ECO:0007744" key="17">
    <source>
    </source>
</evidence>
<evidence type="ECO:0007744" key="18">
    <source>
    </source>
</evidence>
<evidence type="ECO:0007744" key="19">
    <source>
    </source>
</evidence>
<evidence type="ECO:0007744" key="20">
    <source>
    </source>
</evidence>
<evidence type="ECO:0007744" key="21">
    <source>
    </source>
</evidence>
<evidence type="ECO:0007829" key="22">
    <source>
        <dbReference type="PDB" id="7OBP"/>
    </source>
</evidence>
<dbReference type="EMBL" id="AF493978">
    <property type="protein sequence ID" value="AAM27392.1"/>
    <property type="molecule type" value="mRNA"/>
</dbReference>
<dbReference type="EMBL" id="AB074157">
    <property type="protein sequence ID" value="BAE45732.1"/>
    <property type="molecule type" value="mRNA"/>
</dbReference>
<dbReference type="EMBL" id="AK094706">
    <property type="protein sequence ID" value="BAC04402.1"/>
    <property type="molecule type" value="mRNA"/>
</dbReference>
<dbReference type="EMBL" id="AK294558">
    <property type="protein sequence ID" value="BAH11810.1"/>
    <property type="molecule type" value="mRNA"/>
</dbReference>
<dbReference type="EMBL" id="BX537385">
    <property type="protein sequence ID" value="CAD97627.1"/>
    <property type="molecule type" value="mRNA"/>
</dbReference>
<dbReference type="EMBL" id="AL832628">
    <property type="protein sequence ID" value="CAD89948.1"/>
    <property type="status" value="ALT_FRAME"/>
    <property type="molecule type" value="mRNA"/>
</dbReference>
<dbReference type="EMBL" id="AL035689">
    <property type="status" value="NOT_ANNOTATED_CDS"/>
    <property type="molecule type" value="Genomic_DNA"/>
</dbReference>
<dbReference type="EMBL" id="AL078594">
    <property type="status" value="NOT_ANNOTATED_CDS"/>
    <property type="molecule type" value="Genomic_DNA"/>
</dbReference>
<dbReference type="EMBL" id="AL136163">
    <property type="status" value="NOT_ANNOTATED_CDS"/>
    <property type="molecule type" value="Genomic_DNA"/>
</dbReference>
<dbReference type="EMBL" id="CH471051">
    <property type="protein sequence ID" value="EAW48133.1"/>
    <property type="molecule type" value="Genomic_DNA"/>
</dbReference>
<dbReference type="EMBL" id="BC036461">
    <property type="protein sequence ID" value="AAH36461.1"/>
    <property type="molecule type" value="mRNA"/>
</dbReference>
<dbReference type="EMBL" id="BC071782">
    <property type="protein sequence ID" value="AAH71782.1"/>
    <property type="molecule type" value="mRNA"/>
</dbReference>
<dbReference type="EMBL" id="BC137094">
    <property type="protein sequence ID" value="AAI37095.1"/>
    <property type="molecule type" value="mRNA"/>
</dbReference>
<dbReference type="EMBL" id="BC137095">
    <property type="protein sequence ID" value="AAI37096.1"/>
    <property type="molecule type" value="mRNA"/>
</dbReference>
<dbReference type="CCDS" id="CCDS5132.1">
    <molecule id="Q8NI08-1"/>
</dbReference>
<dbReference type="CCDS" id="CCDS56448.1">
    <molecule id="Q8NI08-7"/>
</dbReference>
<dbReference type="CCDS" id="CCDS83125.1">
    <molecule id="Q8NI08-5"/>
</dbReference>
<dbReference type="RefSeq" id="NP_001116314.1">
    <molecule id="Q8NI08-2"/>
    <property type="nucleotide sequence ID" value="NM_001122842.3"/>
</dbReference>
<dbReference type="RefSeq" id="NP_001186548.1">
    <molecule id="Q8NI08-1"/>
    <property type="nucleotide sequence ID" value="NM_001199619.2"/>
</dbReference>
<dbReference type="RefSeq" id="NP_001186549.1">
    <molecule id="Q8NI08-1"/>
    <property type="nucleotide sequence ID" value="NM_001199620.2"/>
</dbReference>
<dbReference type="RefSeq" id="NP_001186550.1">
    <molecule id="Q8NI08-7"/>
    <property type="nucleotide sequence ID" value="NM_001199621.2"/>
</dbReference>
<dbReference type="RefSeq" id="NP_001186551.1">
    <molecule id="Q8NI08-5"/>
    <property type="nucleotide sequence ID" value="NM_001199622.2"/>
</dbReference>
<dbReference type="RefSeq" id="NP_861447.3">
    <molecule id="Q8NI08-1"/>
    <property type="nucleotide sequence ID" value="NM_181782.4"/>
</dbReference>
<dbReference type="RefSeq" id="XP_005266879.1">
    <molecule id="Q8NI08-1"/>
    <property type="nucleotide sequence ID" value="XM_005266822.5"/>
</dbReference>
<dbReference type="RefSeq" id="XP_006715403.1">
    <molecule id="Q8NI08-1"/>
    <property type="nucleotide sequence ID" value="XM_006715340.5"/>
</dbReference>
<dbReference type="RefSeq" id="XP_011533757.1">
    <property type="nucleotide sequence ID" value="XM_011535455.2"/>
</dbReference>
<dbReference type="RefSeq" id="XP_016865758.1">
    <molecule id="Q8NI08-1"/>
    <property type="nucleotide sequence ID" value="XM_017010269.2"/>
</dbReference>
<dbReference type="RefSeq" id="XP_016865759.1">
    <molecule id="Q8NI08-2"/>
    <property type="nucleotide sequence ID" value="XM_017010270.2"/>
</dbReference>
<dbReference type="RefSeq" id="XP_016865760.1">
    <property type="nucleotide sequence ID" value="XM_017010271.1"/>
</dbReference>
<dbReference type="RefSeq" id="XP_016865761.1">
    <molecule id="Q8NI08-2"/>
    <property type="nucleotide sequence ID" value="XM_017010272.3"/>
</dbReference>
<dbReference type="RefSeq" id="XP_016865762.1">
    <molecule id="Q8NI08-2"/>
    <property type="nucleotide sequence ID" value="XM_017010273.3"/>
</dbReference>
<dbReference type="RefSeq" id="XP_016865763.1">
    <molecule id="Q8NI08-2"/>
    <property type="nucleotide sequence ID" value="XM_017010274.3"/>
</dbReference>
<dbReference type="RefSeq" id="XP_024302099.1">
    <molecule id="Q8NI08-1"/>
    <property type="nucleotide sequence ID" value="XM_024446331.2"/>
</dbReference>
<dbReference type="RefSeq" id="XP_024302100.1">
    <molecule id="Q8NI08-2"/>
    <property type="nucleotide sequence ID" value="XM_024446332.2"/>
</dbReference>
<dbReference type="RefSeq" id="XP_047274162.1">
    <molecule id="Q8NI08-1"/>
    <property type="nucleotide sequence ID" value="XM_047418206.1"/>
</dbReference>
<dbReference type="RefSeq" id="XP_047274163.1">
    <molecule id="Q8NI08-2"/>
    <property type="nucleotide sequence ID" value="XM_047418207.1"/>
</dbReference>
<dbReference type="RefSeq" id="XP_054210245.1">
    <molecule id="Q8NI08-1"/>
    <property type="nucleotide sequence ID" value="XM_054354270.1"/>
</dbReference>
<dbReference type="RefSeq" id="XP_054210246.1">
    <molecule id="Q8NI08-1"/>
    <property type="nucleotide sequence ID" value="XM_054354271.1"/>
</dbReference>
<dbReference type="RefSeq" id="XP_054210247.1">
    <molecule id="Q8NI08-1"/>
    <property type="nucleotide sequence ID" value="XM_054354272.1"/>
</dbReference>
<dbReference type="RefSeq" id="XP_054210248.1">
    <molecule id="Q8NI08-1"/>
    <property type="nucleotide sequence ID" value="XM_054354273.1"/>
</dbReference>
<dbReference type="RefSeq" id="XP_054210249.1">
    <molecule id="Q8NI08-1"/>
    <property type="nucleotide sequence ID" value="XM_054354274.1"/>
</dbReference>
<dbReference type="RefSeq" id="XP_054210250.1">
    <molecule id="Q8NI08-2"/>
    <property type="nucleotide sequence ID" value="XM_054354275.1"/>
</dbReference>
<dbReference type="RefSeq" id="XP_054210251.1">
    <molecule id="Q8NI08-2"/>
    <property type="nucleotide sequence ID" value="XM_054354276.1"/>
</dbReference>
<dbReference type="RefSeq" id="XP_054210252.1">
    <molecule id="Q8NI08-2"/>
    <property type="nucleotide sequence ID" value="XM_054354277.1"/>
</dbReference>
<dbReference type="RefSeq" id="XP_054210253.1">
    <molecule id="Q8NI08-2"/>
    <property type="nucleotide sequence ID" value="XM_054354278.1"/>
</dbReference>
<dbReference type="RefSeq" id="XP_054210254.1">
    <molecule id="Q8NI08-2"/>
    <property type="nucleotide sequence ID" value="XM_054354279.1"/>
</dbReference>
<dbReference type="RefSeq" id="XP_054210255.1">
    <molecule id="Q8NI08-2"/>
    <property type="nucleotide sequence ID" value="XM_054354280.1"/>
</dbReference>
<dbReference type="PDB" id="7OBP">
    <property type="method" value="X-ray"/>
    <property type="resolution" value="1.80 A"/>
    <property type="chains" value="A/B/C/D/E/F=777-942"/>
</dbReference>
<dbReference type="PDB" id="8AR6">
    <property type="method" value="X-ray"/>
    <property type="resolution" value="2.20 A"/>
    <property type="chains" value="A/B/C=781-942"/>
</dbReference>
<dbReference type="PDB" id="8AR9">
    <property type="method" value="X-ray"/>
    <property type="resolution" value="2.36 A"/>
    <property type="chains" value="A=781-942"/>
</dbReference>
<dbReference type="PDBsum" id="7OBP"/>
<dbReference type="PDBsum" id="8AR6"/>
<dbReference type="PDBsum" id="8AR9"/>
<dbReference type="SMR" id="Q8NI08"/>
<dbReference type="BioGRID" id="126419">
    <property type="interactions" value="44"/>
</dbReference>
<dbReference type="CORUM" id="Q8NI08"/>
<dbReference type="FunCoup" id="Q8NI08">
    <property type="interactions" value="2613"/>
</dbReference>
<dbReference type="IntAct" id="Q8NI08">
    <property type="interactions" value="27"/>
</dbReference>
<dbReference type="MINT" id="Q8NI08"/>
<dbReference type="STRING" id="9606.ENSP00000376269"/>
<dbReference type="TCDB" id="8.A.126.1.1">
    <property type="family name" value="the nuclear receptor coactivator 7 (ncoa7) family"/>
</dbReference>
<dbReference type="GlyGen" id="Q8NI08">
    <property type="glycosylation" value="1 site, 1 O-linked glycan (1 site)"/>
</dbReference>
<dbReference type="iPTMnet" id="Q8NI08"/>
<dbReference type="PhosphoSitePlus" id="Q8NI08"/>
<dbReference type="SwissPalm" id="Q8NI08"/>
<dbReference type="BioMuta" id="NCOA7"/>
<dbReference type="DMDM" id="110287684"/>
<dbReference type="jPOST" id="Q8NI08"/>
<dbReference type="MassIVE" id="Q8NI08"/>
<dbReference type="PaxDb" id="9606-ENSP00000376269"/>
<dbReference type="PeptideAtlas" id="Q8NI08"/>
<dbReference type="ProteomicsDB" id="34153"/>
<dbReference type="ProteomicsDB" id="73795">
    <molecule id="Q8NI08-1"/>
</dbReference>
<dbReference type="ProteomicsDB" id="73796">
    <molecule id="Q8NI08-2"/>
</dbReference>
<dbReference type="ProteomicsDB" id="73797">
    <molecule id="Q8NI08-3"/>
</dbReference>
<dbReference type="ProteomicsDB" id="73798">
    <molecule id="Q8NI08-4"/>
</dbReference>
<dbReference type="ProteomicsDB" id="73799">
    <molecule id="Q8NI08-5"/>
</dbReference>
<dbReference type="ProteomicsDB" id="73800">
    <molecule id="Q8NI08-6"/>
</dbReference>
<dbReference type="Pumba" id="Q8NI08"/>
<dbReference type="Antibodypedia" id="32708">
    <property type="antibodies" value="206 antibodies from 31 providers"/>
</dbReference>
<dbReference type="DNASU" id="135112"/>
<dbReference type="Ensembl" id="ENST00000229634.13">
    <molecule id="Q8NI08-7"/>
    <property type="protein sequence ID" value="ENSP00000229634.9"/>
    <property type="gene ID" value="ENSG00000111912.20"/>
</dbReference>
<dbReference type="Ensembl" id="ENST00000368357.7">
    <molecule id="Q8NI08-1"/>
    <property type="protein sequence ID" value="ENSP00000357341.3"/>
    <property type="gene ID" value="ENSG00000111912.20"/>
</dbReference>
<dbReference type="Ensembl" id="ENST00000392477.7">
    <molecule id="Q8NI08-1"/>
    <property type="protein sequence ID" value="ENSP00000376269.2"/>
    <property type="gene ID" value="ENSG00000111912.20"/>
</dbReference>
<dbReference type="Ensembl" id="ENST00000438495.6">
    <molecule id="Q8NI08-5"/>
    <property type="protein sequence ID" value="ENSP00000398268.2"/>
    <property type="gene ID" value="ENSG00000111912.20"/>
</dbReference>
<dbReference type="GeneID" id="135112"/>
<dbReference type="KEGG" id="hsa:135112"/>
<dbReference type="MANE-Select" id="ENST00000392477.7">
    <property type="protein sequence ID" value="ENSP00000376269.2"/>
    <property type="RefSeq nucleotide sequence ID" value="NM_181782.5"/>
    <property type="RefSeq protein sequence ID" value="NP_861447.3"/>
</dbReference>
<dbReference type="UCSC" id="uc003qae.5">
    <molecule id="Q8NI08-1"/>
    <property type="organism name" value="human"/>
</dbReference>
<dbReference type="AGR" id="HGNC:21081"/>
<dbReference type="CTD" id="135112"/>
<dbReference type="DisGeNET" id="135112"/>
<dbReference type="GeneCards" id="NCOA7"/>
<dbReference type="HGNC" id="HGNC:21081">
    <property type="gene designation" value="NCOA7"/>
</dbReference>
<dbReference type="HPA" id="ENSG00000111912">
    <property type="expression patterns" value="Low tissue specificity"/>
</dbReference>
<dbReference type="MIM" id="609752">
    <property type="type" value="gene"/>
</dbReference>
<dbReference type="neXtProt" id="NX_Q8NI08"/>
<dbReference type="OpenTargets" id="ENSG00000111912"/>
<dbReference type="PharmGKB" id="PA134905581"/>
<dbReference type="VEuPathDB" id="HostDB:ENSG00000111912"/>
<dbReference type="eggNOG" id="KOG2372">
    <property type="taxonomic scope" value="Eukaryota"/>
</dbReference>
<dbReference type="GeneTree" id="ENSGT00940000155141"/>
<dbReference type="HOGENOM" id="CLU_007095_2_0_1"/>
<dbReference type="InParanoid" id="Q8NI08"/>
<dbReference type="OMA" id="SDTQAAF"/>
<dbReference type="OrthoDB" id="26679at2759"/>
<dbReference type="PAN-GO" id="Q8NI08">
    <property type="GO annotations" value="4 GO annotations based on evolutionary models"/>
</dbReference>
<dbReference type="PhylomeDB" id="Q8NI08"/>
<dbReference type="TreeFam" id="TF313530"/>
<dbReference type="PathwayCommons" id="Q8NI08"/>
<dbReference type="SignaLink" id="Q8NI08"/>
<dbReference type="BioGRID-ORCS" id="135112">
    <property type="hits" value="17 hits in 1167 CRISPR screens"/>
</dbReference>
<dbReference type="ChiTaRS" id="NCOA7">
    <property type="organism name" value="human"/>
</dbReference>
<dbReference type="GeneWiki" id="NCOA7"/>
<dbReference type="GenomeRNAi" id="135112"/>
<dbReference type="Pharos" id="Q8NI08">
    <property type="development level" value="Tbio"/>
</dbReference>
<dbReference type="PRO" id="PR:Q8NI08"/>
<dbReference type="Proteomes" id="UP000005640">
    <property type="component" value="Chromosome 6"/>
</dbReference>
<dbReference type="RNAct" id="Q8NI08">
    <property type="molecule type" value="protein"/>
</dbReference>
<dbReference type="Bgee" id="ENSG00000111912">
    <property type="expression patterns" value="Expressed in kidney epithelium and 188 other cell types or tissues"/>
</dbReference>
<dbReference type="ExpressionAtlas" id="Q8NI08">
    <property type="expression patterns" value="baseline and differential"/>
</dbReference>
<dbReference type="GO" id="GO:0005634">
    <property type="term" value="C:nucleus"/>
    <property type="evidence" value="ECO:0000318"/>
    <property type="project" value="GO_Central"/>
</dbReference>
<dbReference type="GO" id="GO:0016922">
    <property type="term" value="F:nuclear receptor binding"/>
    <property type="evidence" value="ECO:0000314"/>
    <property type="project" value="UniProtKB"/>
</dbReference>
<dbReference type="GO" id="GO:0003713">
    <property type="term" value="F:transcription coactivator activity"/>
    <property type="evidence" value="ECO:0000314"/>
    <property type="project" value="UniProtKB"/>
</dbReference>
<dbReference type="GO" id="GO:1900408">
    <property type="term" value="P:negative regulation of cellular response to oxidative stress"/>
    <property type="evidence" value="ECO:0007669"/>
    <property type="project" value="Ensembl"/>
</dbReference>
<dbReference type="GO" id="GO:0045944">
    <property type="term" value="P:positive regulation of transcription by RNA polymerase II"/>
    <property type="evidence" value="ECO:0000314"/>
    <property type="project" value="UniProtKB"/>
</dbReference>
<dbReference type="GO" id="GO:0006357">
    <property type="term" value="P:regulation of transcription by RNA polymerase II"/>
    <property type="evidence" value="ECO:0000318"/>
    <property type="project" value="GO_Central"/>
</dbReference>
<dbReference type="GO" id="GO:0006979">
    <property type="term" value="P:response to oxidative stress"/>
    <property type="evidence" value="ECO:0000318"/>
    <property type="project" value="GO_Central"/>
</dbReference>
<dbReference type="CDD" id="cd00118">
    <property type="entry name" value="LysM"/>
    <property type="match status" value="1"/>
</dbReference>
<dbReference type="Gene3D" id="3.10.350.10">
    <property type="entry name" value="LysM domain"/>
    <property type="match status" value="1"/>
</dbReference>
<dbReference type="InterPro" id="IPR018392">
    <property type="entry name" value="LysM_dom"/>
</dbReference>
<dbReference type="InterPro" id="IPR036779">
    <property type="entry name" value="LysM_dom_sf"/>
</dbReference>
<dbReference type="InterPro" id="IPR006571">
    <property type="entry name" value="TLDc_dom"/>
</dbReference>
<dbReference type="PANTHER" id="PTHR23354:SF68">
    <property type="entry name" value="NUCLEAR RECEPTOR COACTIVATOR 7"/>
    <property type="match status" value="1"/>
</dbReference>
<dbReference type="PANTHER" id="PTHR23354">
    <property type="entry name" value="NUCLEOLAR PROTEIN 7/ESTROGEN RECEPTOR COACTIVATOR-RELATED"/>
    <property type="match status" value="1"/>
</dbReference>
<dbReference type="Pfam" id="PF01476">
    <property type="entry name" value="LysM"/>
    <property type="match status" value="1"/>
</dbReference>
<dbReference type="Pfam" id="PF07534">
    <property type="entry name" value="TLD"/>
    <property type="match status" value="1"/>
</dbReference>
<dbReference type="SMART" id="SM00257">
    <property type="entry name" value="LysM"/>
    <property type="match status" value="1"/>
</dbReference>
<dbReference type="SMART" id="SM00584">
    <property type="entry name" value="TLDc"/>
    <property type="match status" value="1"/>
</dbReference>
<dbReference type="SUPFAM" id="SSF54106">
    <property type="entry name" value="LysM domain"/>
    <property type="match status" value="1"/>
</dbReference>
<dbReference type="PROSITE" id="PS51782">
    <property type="entry name" value="LYSM"/>
    <property type="match status" value="1"/>
</dbReference>
<dbReference type="PROSITE" id="PS51886">
    <property type="entry name" value="TLDC"/>
    <property type="match status" value="1"/>
</dbReference>
<proteinExistence type="evidence at protein level"/>